<feature type="initiator methionine" description="Removed" evidence="2">
    <location>
        <position position="1"/>
    </location>
</feature>
<feature type="chain" id="PRO_0000265100" description="Migration and invasion enhancer 1">
    <location>
        <begin position="2"/>
        <end position="112"/>
    </location>
</feature>
<feature type="propeptide" id="PRO_0000396009" description="Removed in mature form" evidence="1">
    <location>
        <begin position="113"/>
        <end position="115"/>
    </location>
</feature>
<feature type="modified residue" description="N-acetylserine" evidence="2">
    <location>
        <position position="2"/>
    </location>
</feature>
<feature type="lipid moiety-binding region" description="S-geranylgeranyl cysteine" evidence="1">
    <location>
        <position position="112"/>
    </location>
</feature>
<feature type="disulfide bond" description="Redox-active" evidence="1">
    <location>
        <begin position="30"/>
        <end position="33"/>
    </location>
</feature>
<feature type="mutagenesis site" description="No effect on interaction with GPX1." evidence="3">
    <original>C</original>
    <variation>S</variation>
    <location>
        <position position="30"/>
    </location>
</feature>
<feature type="mutagenesis site" description="No effect on interaction with GPX1." evidence="3">
    <original>C</original>
    <variation>S</variation>
    <location>
        <position position="33"/>
    </location>
</feature>
<protein>
    <recommendedName>
        <fullName>Migration and invasion enhancer 1</fullName>
    </recommendedName>
</protein>
<accession>Q9CQ86</accession>
<accession>A2A556</accession>
<dbReference type="EMBL" id="AK002959">
    <property type="protein sequence ID" value="BAB22480.1"/>
    <property type="molecule type" value="mRNA"/>
</dbReference>
<dbReference type="EMBL" id="AK007795">
    <property type="protein sequence ID" value="BAB25261.1"/>
    <property type="molecule type" value="mRNA"/>
</dbReference>
<dbReference type="EMBL" id="AK009922">
    <property type="protein sequence ID" value="BAB26586.1"/>
    <property type="molecule type" value="mRNA"/>
</dbReference>
<dbReference type="EMBL" id="AK041314">
    <property type="protein sequence ID" value="BAC30901.1"/>
    <property type="molecule type" value="mRNA"/>
</dbReference>
<dbReference type="EMBL" id="AL591390">
    <property type="status" value="NOT_ANNOTATED_CDS"/>
    <property type="molecule type" value="Genomic_DNA"/>
</dbReference>
<dbReference type="EMBL" id="CH466556">
    <property type="protein sequence ID" value="EDL16143.1"/>
    <property type="molecule type" value="Genomic_DNA"/>
</dbReference>
<dbReference type="EMBL" id="BC021589">
    <property type="protein sequence ID" value="AAH21589.1"/>
    <property type="molecule type" value="mRNA"/>
</dbReference>
<dbReference type="CCDS" id="CCDS25350.1"/>
<dbReference type="RefSeq" id="NP_079835.1">
    <property type="nucleotide sequence ID" value="NM_025559.2"/>
</dbReference>
<dbReference type="RefSeq" id="XP_030101315.1">
    <property type="nucleotide sequence ID" value="XM_030245455.1"/>
</dbReference>
<dbReference type="SMR" id="Q9CQ86"/>
<dbReference type="FunCoup" id="Q9CQ86">
    <property type="interactions" value="241"/>
</dbReference>
<dbReference type="STRING" id="10090.ENSMUSP00000002655"/>
<dbReference type="GlyGen" id="Q9CQ86">
    <property type="glycosylation" value="1 site, 1 O-linked glycan (1 site)"/>
</dbReference>
<dbReference type="iPTMnet" id="Q9CQ86"/>
<dbReference type="PhosphoSitePlus" id="Q9CQ86"/>
<dbReference type="SwissPalm" id="Q9CQ86"/>
<dbReference type="PaxDb" id="10090-ENSMUSP00000002655"/>
<dbReference type="PeptideAtlas" id="Q9CQ86"/>
<dbReference type="ProteomicsDB" id="295666"/>
<dbReference type="Pumba" id="Q9CQ86"/>
<dbReference type="Antibodypedia" id="28368">
    <property type="antibodies" value="568 antibodies from 26 providers"/>
</dbReference>
<dbReference type="DNASU" id="103742"/>
<dbReference type="Ensembl" id="ENSMUST00000002655.8">
    <property type="protein sequence ID" value="ENSMUSP00000002655.8"/>
    <property type="gene ID" value="ENSMUSG00000002580.8"/>
</dbReference>
<dbReference type="GeneID" id="103742"/>
<dbReference type="KEGG" id="mmu:103742"/>
<dbReference type="UCSC" id="uc007lgj.1">
    <property type="organism name" value="mouse"/>
</dbReference>
<dbReference type="AGR" id="MGI:1913678"/>
<dbReference type="CTD" id="84299"/>
<dbReference type="MGI" id="MGI:1913678">
    <property type="gene designation" value="Mien1"/>
</dbReference>
<dbReference type="VEuPathDB" id="HostDB:ENSMUSG00000002580"/>
<dbReference type="eggNOG" id="ENOG502S3GR">
    <property type="taxonomic scope" value="Eukaryota"/>
</dbReference>
<dbReference type="GeneTree" id="ENSGT00390000010440"/>
<dbReference type="HOGENOM" id="CLU_068510_4_1_1"/>
<dbReference type="InParanoid" id="Q9CQ86"/>
<dbReference type="OMA" id="AAPIKDC"/>
<dbReference type="OrthoDB" id="5962009at2759"/>
<dbReference type="PhylomeDB" id="Q9CQ86"/>
<dbReference type="TreeFam" id="TF326627"/>
<dbReference type="BioGRID-ORCS" id="103742">
    <property type="hits" value="1 hit in 79 CRISPR screens"/>
</dbReference>
<dbReference type="ChiTaRS" id="Mien1">
    <property type="organism name" value="mouse"/>
</dbReference>
<dbReference type="PRO" id="PR:Q9CQ86"/>
<dbReference type="Proteomes" id="UP000000589">
    <property type="component" value="Chromosome 11"/>
</dbReference>
<dbReference type="RNAct" id="Q9CQ86">
    <property type="molecule type" value="protein"/>
</dbReference>
<dbReference type="Bgee" id="ENSMUSG00000002580">
    <property type="expression patterns" value="Expressed in motor neuron and 271 other cell types or tissues"/>
</dbReference>
<dbReference type="GO" id="GO:0009898">
    <property type="term" value="C:cytoplasmic side of plasma membrane"/>
    <property type="evidence" value="ECO:0000250"/>
    <property type="project" value="UniProtKB"/>
</dbReference>
<dbReference type="GO" id="GO:0005829">
    <property type="term" value="C:cytosol"/>
    <property type="evidence" value="ECO:0000314"/>
    <property type="project" value="UniProtKB"/>
</dbReference>
<dbReference type="GO" id="GO:0006915">
    <property type="term" value="P:apoptotic process"/>
    <property type="evidence" value="ECO:0007669"/>
    <property type="project" value="UniProtKB-KW"/>
</dbReference>
<dbReference type="GO" id="GO:0043066">
    <property type="term" value="P:negative regulation of apoptotic process"/>
    <property type="evidence" value="ECO:0000250"/>
    <property type="project" value="UniProtKB"/>
</dbReference>
<dbReference type="GO" id="GO:0030335">
    <property type="term" value="P:positive regulation of cell migration"/>
    <property type="evidence" value="ECO:0000250"/>
    <property type="project" value="UniProtKB"/>
</dbReference>
<dbReference type="GO" id="GO:0051491">
    <property type="term" value="P:positive regulation of filopodium assembly"/>
    <property type="evidence" value="ECO:0000250"/>
    <property type="project" value="UniProtKB"/>
</dbReference>
<dbReference type="FunFam" id="3.40.30.10:FF:000131">
    <property type="entry name" value="migration and invasion enhancer 1"/>
    <property type="match status" value="1"/>
</dbReference>
<dbReference type="Gene3D" id="3.40.30.10">
    <property type="entry name" value="Glutaredoxin"/>
    <property type="match status" value="1"/>
</dbReference>
<dbReference type="InterPro" id="IPR011893">
    <property type="entry name" value="Selenoprotein_Rdx-typ"/>
</dbReference>
<dbReference type="InterPro" id="IPR051441">
    <property type="entry name" value="SelW_related"/>
</dbReference>
<dbReference type="InterPro" id="IPR036249">
    <property type="entry name" value="Thioredoxin-like_sf"/>
</dbReference>
<dbReference type="NCBIfam" id="TIGR02174">
    <property type="entry name" value="CXXU_selWTH"/>
    <property type="match status" value="1"/>
</dbReference>
<dbReference type="PANTHER" id="PTHR15124:SF27">
    <property type="entry name" value="MIGRATION AND INVASION ENHANCER 1"/>
    <property type="match status" value="1"/>
</dbReference>
<dbReference type="PANTHER" id="PTHR15124">
    <property type="entry name" value="SELENOPROTEIN W"/>
    <property type="match status" value="1"/>
</dbReference>
<dbReference type="Pfam" id="PF10262">
    <property type="entry name" value="Rdx"/>
    <property type="match status" value="1"/>
</dbReference>
<dbReference type="SUPFAM" id="SSF52833">
    <property type="entry name" value="Thioredoxin-like"/>
    <property type="match status" value="1"/>
</dbReference>
<name>MIEN1_MOUSE</name>
<evidence type="ECO:0000250" key="1"/>
<evidence type="ECO:0000250" key="2">
    <source>
        <dbReference type="UniProtKB" id="Q9BRT3"/>
    </source>
</evidence>
<evidence type="ECO:0000269" key="3">
    <source>
    </source>
</evidence>
<evidence type="ECO:0000305" key="4"/>
<sequence>MSGEPAPVSVVPPPGEVEAGSGVHIVVEYCKPCGFEATYLELASAVKEEYPGIEIESRLGGTGAFEIEINGQLVFSKLENGGFPYEKDLMEAIRRASNGEPVEKITNSRPPCVIL</sequence>
<comment type="function">
    <text evidence="1">Increases cell migration by inducing filopodia formation at the leading edge of migrating cells. Plays a role in regulation of apoptosis, possibly through control of CASP3. May be involved in a redox-related process (By similarity).</text>
</comment>
<comment type="subunit">
    <text evidence="3">Interacts with GPX1.</text>
</comment>
<comment type="subcellular location">
    <subcellularLocation>
        <location evidence="3">Cytoplasm</location>
        <location evidence="3">Cytosol</location>
    </subcellularLocation>
    <subcellularLocation>
        <location evidence="1">Cell membrane</location>
        <topology evidence="1">Lipid-anchor</topology>
        <orientation evidence="1">Cytoplasmic side</orientation>
    </subcellularLocation>
    <text evidence="1">Concentrates at the leading edge of migrating cells. Localizes outside membrane raft regions (By similarity).</text>
</comment>
<comment type="tissue specificity">
    <text evidence="3">Widely expressed with highest levels in kidney followed by brain and testis.</text>
</comment>
<comment type="PTM">
    <text evidence="1">Isoprenylation facilitates association with the plasma membrane and enhances the migratory phenotype of cells by inducing increased filopodia formation.</text>
</comment>
<comment type="similarity">
    <text evidence="4">Belongs to the SelWTH family.</text>
</comment>
<keyword id="KW-0007">Acetylation</keyword>
<keyword id="KW-0053">Apoptosis</keyword>
<keyword id="KW-1003">Cell membrane</keyword>
<keyword id="KW-0963">Cytoplasm</keyword>
<keyword id="KW-1015">Disulfide bond</keyword>
<keyword id="KW-0449">Lipoprotein</keyword>
<keyword id="KW-0472">Membrane</keyword>
<keyword id="KW-0636">Prenylation</keyword>
<keyword id="KW-0676">Redox-active center</keyword>
<keyword id="KW-1185">Reference proteome</keyword>
<gene>
    <name type="primary">Mien1</name>
    <name type="synonym">Rdx12</name>
</gene>
<organism>
    <name type="scientific">Mus musculus</name>
    <name type="common">Mouse</name>
    <dbReference type="NCBI Taxonomy" id="10090"/>
    <lineage>
        <taxon>Eukaryota</taxon>
        <taxon>Metazoa</taxon>
        <taxon>Chordata</taxon>
        <taxon>Craniata</taxon>
        <taxon>Vertebrata</taxon>
        <taxon>Euteleostomi</taxon>
        <taxon>Mammalia</taxon>
        <taxon>Eutheria</taxon>
        <taxon>Euarchontoglires</taxon>
        <taxon>Glires</taxon>
        <taxon>Rodentia</taxon>
        <taxon>Myomorpha</taxon>
        <taxon>Muroidea</taxon>
        <taxon>Muridae</taxon>
        <taxon>Murinae</taxon>
        <taxon>Mus</taxon>
        <taxon>Mus</taxon>
    </lineage>
</organism>
<reference key="1">
    <citation type="journal article" date="2005" name="Science">
        <title>The transcriptional landscape of the mammalian genome.</title>
        <authorList>
            <person name="Carninci P."/>
            <person name="Kasukawa T."/>
            <person name="Katayama S."/>
            <person name="Gough J."/>
            <person name="Frith M.C."/>
            <person name="Maeda N."/>
            <person name="Oyama R."/>
            <person name="Ravasi T."/>
            <person name="Lenhard B."/>
            <person name="Wells C."/>
            <person name="Kodzius R."/>
            <person name="Shimokawa K."/>
            <person name="Bajic V.B."/>
            <person name="Brenner S.E."/>
            <person name="Batalov S."/>
            <person name="Forrest A.R."/>
            <person name="Zavolan M."/>
            <person name="Davis M.J."/>
            <person name="Wilming L.G."/>
            <person name="Aidinis V."/>
            <person name="Allen J.E."/>
            <person name="Ambesi-Impiombato A."/>
            <person name="Apweiler R."/>
            <person name="Aturaliya R.N."/>
            <person name="Bailey T.L."/>
            <person name="Bansal M."/>
            <person name="Baxter L."/>
            <person name="Beisel K.W."/>
            <person name="Bersano T."/>
            <person name="Bono H."/>
            <person name="Chalk A.M."/>
            <person name="Chiu K.P."/>
            <person name="Choudhary V."/>
            <person name="Christoffels A."/>
            <person name="Clutterbuck D.R."/>
            <person name="Crowe M.L."/>
            <person name="Dalla E."/>
            <person name="Dalrymple B.P."/>
            <person name="de Bono B."/>
            <person name="Della Gatta G."/>
            <person name="di Bernardo D."/>
            <person name="Down T."/>
            <person name="Engstrom P."/>
            <person name="Fagiolini M."/>
            <person name="Faulkner G."/>
            <person name="Fletcher C.F."/>
            <person name="Fukushima T."/>
            <person name="Furuno M."/>
            <person name="Futaki S."/>
            <person name="Gariboldi M."/>
            <person name="Georgii-Hemming P."/>
            <person name="Gingeras T.R."/>
            <person name="Gojobori T."/>
            <person name="Green R.E."/>
            <person name="Gustincich S."/>
            <person name="Harbers M."/>
            <person name="Hayashi Y."/>
            <person name="Hensch T.K."/>
            <person name="Hirokawa N."/>
            <person name="Hill D."/>
            <person name="Huminiecki L."/>
            <person name="Iacono M."/>
            <person name="Ikeo K."/>
            <person name="Iwama A."/>
            <person name="Ishikawa T."/>
            <person name="Jakt M."/>
            <person name="Kanapin A."/>
            <person name="Katoh M."/>
            <person name="Kawasawa Y."/>
            <person name="Kelso J."/>
            <person name="Kitamura H."/>
            <person name="Kitano H."/>
            <person name="Kollias G."/>
            <person name="Krishnan S.P."/>
            <person name="Kruger A."/>
            <person name="Kummerfeld S.K."/>
            <person name="Kurochkin I.V."/>
            <person name="Lareau L.F."/>
            <person name="Lazarevic D."/>
            <person name="Lipovich L."/>
            <person name="Liu J."/>
            <person name="Liuni S."/>
            <person name="McWilliam S."/>
            <person name="Madan Babu M."/>
            <person name="Madera M."/>
            <person name="Marchionni L."/>
            <person name="Matsuda H."/>
            <person name="Matsuzawa S."/>
            <person name="Miki H."/>
            <person name="Mignone F."/>
            <person name="Miyake S."/>
            <person name="Morris K."/>
            <person name="Mottagui-Tabar S."/>
            <person name="Mulder N."/>
            <person name="Nakano N."/>
            <person name="Nakauchi H."/>
            <person name="Ng P."/>
            <person name="Nilsson R."/>
            <person name="Nishiguchi S."/>
            <person name="Nishikawa S."/>
            <person name="Nori F."/>
            <person name="Ohara O."/>
            <person name="Okazaki Y."/>
            <person name="Orlando V."/>
            <person name="Pang K.C."/>
            <person name="Pavan W.J."/>
            <person name="Pavesi G."/>
            <person name="Pesole G."/>
            <person name="Petrovsky N."/>
            <person name="Piazza S."/>
            <person name="Reed J."/>
            <person name="Reid J.F."/>
            <person name="Ring B.Z."/>
            <person name="Ringwald M."/>
            <person name="Rost B."/>
            <person name="Ruan Y."/>
            <person name="Salzberg S.L."/>
            <person name="Sandelin A."/>
            <person name="Schneider C."/>
            <person name="Schoenbach C."/>
            <person name="Sekiguchi K."/>
            <person name="Semple C.A."/>
            <person name="Seno S."/>
            <person name="Sessa L."/>
            <person name="Sheng Y."/>
            <person name="Shibata Y."/>
            <person name="Shimada H."/>
            <person name="Shimada K."/>
            <person name="Silva D."/>
            <person name="Sinclair B."/>
            <person name="Sperling S."/>
            <person name="Stupka E."/>
            <person name="Sugiura K."/>
            <person name="Sultana R."/>
            <person name="Takenaka Y."/>
            <person name="Taki K."/>
            <person name="Tammoja K."/>
            <person name="Tan S.L."/>
            <person name="Tang S."/>
            <person name="Taylor M.S."/>
            <person name="Tegner J."/>
            <person name="Teichmann S.A."/>
            <person name="Ueda H.R."/>
            <person name="van Nimwegen E."/>
            <person name="Verardo R."/>
            <person name="Wei C.L."/>
            <person name="Yagi K."/>
            <person name="Yamanishi H."/>
            <person name="Zabarovsky E."/>
            <person name="Zhu S."/>
            <person name="Zimmer A."/>
            <person name="Hide W."/>
            <person name="Bult C."/>
            <person name="Grimmond S.M."/>
            <person name="Teasdale R.D."/>
            <person name="Liu E.T."/>
            <person name="Brusic V."/>
            <person name="Quackenbush J."/>
            <person name="Wahlestedt C."/>
            <person name="Mattick J.S."/>
            <person name="Hume D.A."/>
            <person name="Kai C."/>
            <person name="Sasaki D."/>
            <person name="Tomaru Y."/>
            <person name="Fukuda S."/>
            <person name="Kanamori-Katayama M."/>
            <person name="Suzuki M."/>
            <person name="Aoki J."/>
            <person name="Arakawa T."/>
            <person name="Iida J."/>
            <person name="Imamura K."/>
            <person name="Itoh M."/>
            <person name="Kato T."/>
            <person name="Kawaji H."/>
            <person name="Kawagashira N."/>
            <person name="Kawashima T."/>
            <person name="Kojima M."/>
            <person name="Kondo S."/>
            <person name="Konno H."/>
            <person name="Nakano K."/>
            <person name="Ninomiya N."/>
            <person name="Nishio T."/>
            <person name="Okada M."/>
            <person name="Plessy C."/>
            <person name="Shibata K."/>
            <person name="Shiraki T."/>
            <person name="Suzuki S."/>
            <person name="Tagami M."/>
            <person name="Waki K."/>
            <person name="Watahiki A."/>
            <person name="Okamura-Oho Y."/>
            <person name="Suzuki H."/>
            <person name="Kawai J."/>
            <person name="Hayashizaki Y."/>
        </authorList>
    </citation>
    <scope>NUCLEOTIDE SEQUENCE [LARGE SCALE MRNA]</scope>
    <source>
        <strain>C57BL/6J</strain>
        <tissue>Aorta</tissue>
        <tissue>Brain</tissue>
        <tissue>Pancreas</tissue>
        <tissue>Tongue</tissue>
        <tissue>Vein</tissue>
    </source>
</reference>
<reference key="2">
    <citation type="journal article" date="2009" name="PLoS Biol.">
        <title>Lineage-specific biology revealed by a finished genome assembly of the mouse.</title>
        <authorList>
            <person name="Church D.M."/>
            <person name="Goodstadt L."/>
            <person name="Hillier L.W."/>
            <person name="Zody M.C."/>
            <person name="Goldstein S."/>
            <person name="She X."/>
            <person name="Bult C.J."/>
            <person name="Agarwala R."/>
            <person name="Cherry J.L."/>
            <person name="DiCuccio M."/>
            <person name="Hlavina W."/>
            <person name="Kapustin Y."/>
            <person name="Meric P."/>
            <person name="Maglott D."/>
            <person name="Birtle Z."/>
            <person name="Marques A.C."/>
            <person name="Graves T."/>
            <person name="Zhou S."/>
            <person name="Teague B."/>
            <person name="Potamousis K."/>
            <person name="Churas C."/>
            <person name="Place M."/>
            <person name="Herschleb J."/>
            <person name="Runnheim R."/>
            <person name="Forrest D."/>
            <person name="Amos-Landgraf J."/>
            <person name="Schwartz D.C."/>
            <person name="Cheng Z."/>
            <person name="Lindblad-Toh K."/>
            <person name="Eichler E.E."/>
            <person name="Ponting C.P."/>
        </authorList>
    </citation>
    <scope>NUCLEOTIDE SEQUENCE [LARGE SCALE GENOMIC DNA]</scope>
    <source>
        <strain>C57BL/6J</strain>
    </source>
</reference>
<reference key="3">
    <citation type="submission" date="2005-07" db="EMBL/GenBank/DDBJ databases">
        <authorList>
            <person name="Mural R.J."/>
            <person name="Adams M.D."/>
            <person name="Myers E.W."/>
            <person name="Smith H.O."/>
            <person name="Venter J.C."/>
        </authorList>
    </citation>
    <scope>NUCLEOTIDE SEQUENCE [LARGE SCALE GENOMIC DNA]</scope>
</reference>
<reference key="4">
    <citation type="journal article" date="2004" name="Genome Res.">
        <title>The status, quality, and expansion of the NIH full-length cDNA project: the Mammalian Gene Collection (MGC).</title>
        <authorList>
            <consortium name="The MGC Project Team"/>
        </authorList>
    </citation>
    <scope>NUCLEOTIDE SEQUENCE [LARGE SCALE MRNA]</scope>
    <source>
        <strain>FVB/N</strain>
        <tissue>Liver</tissue>
    </source>
</reference>
<reference key="5">
    <citation type="journal article" date="2007" name="Biochemistry">
        <title>SelT, SelW, SelH, and Rdx12: genomics and molecular insights into the functions of selenoproteins of a novel thioredoxin-like family.</title>
        <authorList>
            <person name="Dikiy A."/>
            <person name="Novoselov S.V."/>
            <person name="Fomenko D.E."/>
            <person name="Sengupta A."/>
            <person name="Carlson B.A."/>
            <person name="Cerny R.L."/>
            <person name="Ginalski K."/>
            <person name="Grishin N.V."/>
            <person name="Hatfield D.L."/>
            <person name="Gladyshev V.N."/>
        </authorList>
    </citation>
    <scope>INTERACTION WITH GPX1</scope>
    <scope>SUBCELLULAR LOCATION</scope>
    <scope>TISSUE SPECIFICITY</scope>
    <scope>MUTAGENESIS OF CYS-30 AND CYS-33</scope>
    <scope>IDENTIFICATION BY MASS SPECTROMETRY</scope>
</reference>
<reference key="6">
    <citation type="journal article" date="2010" name="Cell">
        <title>A tissue-specific atlas of mouse protein phosphorylation and expression.</title>
        <authorList>
            <person name="Huttlin E.L."/>
            <person name="Jedrychowski M.P."/>
            <person name="Elias J.E."/>
            <person name="Goswami T."/>
            <person name="Rad R."/>
            <person name="Beausoleil S.A."/>
            <person name="Villen J."/>
            <person name="Haas W."/>
            <person name="Sowa M.E."/>
            <person name="Gygi S.P."/>
        </authorList>
    </citation>
    <scope>IDENTIFICATION BY MASS SPECTROMETRY [LARGE SCALE ANALYSIS]</scope>
    <source>
        <tissue>Brain</tissue>
        <tissue>Kidney</tissue>
        <tissue>Spleen</tissue>
    </source>
</reference>
<proteinExistence type="evidence at protein level"/>